<feature type="chain" id="PRO_0000442134" description="Flavodoxin FldP">
    <location>
        <begin position="1"/>
        <end position="184"/>
    </location>
</feature>
<feature type="domain" description="Flavodoxin-like" evidence="1">
    <location>
        <begin position="4"/>
        <end position="176"/>
    </location>
</feature>
<feature type="binding site" evidence="1">
    <location>
        <begin position="10"/>
        <end position="14"/>
    </location>
    <ligand>
        <name>FMN</name>
        <dbReference type="ChEBI" id="CHEBI:58210"/>
    </ligand>
</feature>
<feature type="binding site" evidence="1">
    <location>
        <begin position="91"/>
        <end position="147"/>
    </location>
    <ligand>
        <name>FMN</name>
        <dbReference type="ChEBI" id="CHEBI:58210"/>
    </ligand>
</feature>
<comment type="function">
    <text evidence="2">Flavodoxins are low-potential electron donors to a number of redox enzymes. FldP protects the cell from oxidative stress and reactive oxygen species (ROS) damage, thereby expanding the capabilities of P.aeruginosa to thrive in hostile environments, and contributes to bacterial survival within the host. In vitro, is able to mediate ferredoxin-NADP(H) reductase (FNR)-driven cytochrome c reduction.</text>
</comment>
<comment type="cofactor">
    <cofactor evidence="2">
        <name>FMN</name>
        <dbReference type="ChEBI" id="CHEBI:58210"/>
    </cofactor>
</comment>
<comment type="induction">
    <text evidence="2">Up-regulated by oxidative stress conditions through an OxyR-independent mechanism. Makes part of an operon that consists of PA14_22510 to PA14_22540. Is repressed by the LysR-like transcriptional regulator PA14_22550.</text>
</comment>
<comment type="disruption phenotype">
    <text evidence="2">Cells lacking this gene accumulate higher intracellular ROS levels and exhibit decreased tolerance to H(2)O(2) toxicity compared to wild-type siblings. Inactivation of this gene also produces a moderate but significant decrease of 24% in the intracellular survival of P.aeruginosa in phagocytic cells. During in vivo infection of Drosophila melanogaster, flies that have been fed with the wild-type strain of P.aeruginosa die faster than those fed with the fldP deletion mutant.</text>
</comment>
<comment type="similarity">
    <text evidence="4">Belongs to the FldP flavodoxin family.</text>
</comment>
<proteinExistence type="evidence at transcript level"/>
<reference key="1">
    <citation type="journal article" date="2006" name="Genome Biol.">
        <title>Genomic analysis reveals that Pseudomonas aeruginosa virulence is combinatorial.</title>
        <authorList>
            <person name="Lee D.G."/>
            <person name="Urbach J.M."/>
            <person name="Wu G."/>
            <person name="Liberati N.T."/>
            <person name="Feinbaum R.L."/>
            <person name="Miyata S."/>
            <person name="Diggins L.T."/>
            <person name="He J."/>
            <person name="Saucier M."/>
            <person name="Deziel E."/>
            <person name="Friedman L."/>
            <person name="Li L."/>
            <person name="Grills G."/>
            <person name="Montgomery K."/>
            <person name="Kucherlapati R."/>
            <person name="Rahme L.G."/>
            <person name="Ausubel F.M."/>
        </authorList>
    </citation>
    <scope>NUCLEOTIDE SEQUENCE [LARGE SCALE GENOMIC DNA]</scope>
    <source>
        <strain>UCBPP-PA14</strain>
    </source>
</reference>
<reference key="2">
    <citation type="journal article" date="2014" name="PLoS Genet.">
        <title>A long-chain flavodoxin protects Pseudomonas aeruginosa from oxidative stress and host bacterial clearance.</title>
        <authorList>
            <person name="Moyano A.J."/>
            <person name="Tobares R.A."/>
            <person name="Rizzi Y.S."/>
            <person name="Krapp A.R."/>
            <person name="Mondotte J.A."/>
            <person name="Bocco J.L."/>
            <person name="Saleh M.C."/>
            <person name="Carrillo N."/>
            <person name="Smania A.M."/>
        </authorList>
    </citation>
    <scope>FUNCTION</scope>
    <scope>COFACTOR</scope>
    <scope>INDUCTION</scope>
    <scope>DISRUPTION PHENOTYPE</scope>
    <source>
        <strain>UCBPP-PA14</strain>
    </source>
</reference>
<gene>
    <name evidence="3" type="primary">fldP</name>
    <name evidence="5" type="synonym">wrbA</name>
    <name evidence="5" type="ordered locus">PA14_22540</name>
</gene>
<organism>
    <name type="scientific">Pseudomonas aeruginosa (strain UCBPP-PA14)</name>
    <dbReference type="NCBI Taxonomy" id="208963"/>
    <lineage>
        <taxon>Bacteria</taxon>
        <taxon>Pseudomonadati</taxon>
        <taxon>Pseudomonadota</taxon>
        <taxon>Gammaproteobacteria</taxon>
        <taxon>Pseudomonadales</taxon>
        <taxon>Pseudomonadaceae</taxon>
        <taxon>Pseudomonas</taxon>
    </lineage>
</organism>
<name>FLDP_PSEAB</name>
<keyword id="KW-0249">Electron transport</keyword>
<keyword id="KW-0285">Flavoprotein</keyword>
<keyword id="KW-0288">FMN</keyword>
<keyword id="KW-0346">Stress response</keyword>
<keyword id="KW-0813">Transport</keyword>
<accession>A0A0H2ZDT7</accession>
<dbReference type="EMBL" id="CP000438">
    <property type="protein sequence ID" value="ABJ12450.1"/>
    <property type="molecule type" value="Genomic_DNA"/>
</dbReference>
<dbReference type="RefSeq" id="WP_003138419.1">
    <property type="nucleotide sequence ID" value="NZ_CP034244.1"/>
</dbReference>
<dbReference type="SMR" id="A0A0H2ZDT7"/>
<dbReference type="KEGG" id="pau:PA14_22540"/>
<dbReference type="HOGENOM" id="CLU_051402_2_1_6"/>
<dbReference type="BioCyc" id="PAER208963:G1G74-1877-MONOMER"/>
<dbReference type="Proteomes" id="UP000000653">
    <property type="component" value="Chromosome"/>
</dbReference>
<dbReference type="GO" id="GO:0016020">
    <property type="term" value="C:membrane"/>
    <property type="evidence" value="ECO:0007669"/>
    <property type="project" value="TreeGrafter"/>
</dbReference>
<dbReference type="GO" id="GO:0010181">
    <property type="term" value="F:FMN binding"/>
    <property type="evidence" value="ECO:0007669"/>
    <property type="project" value="InterPro"/>
</dbReference>
<dbReference type="GO" id="GO:0003955">
    <property type="term" value="F:NAD(P)H dehydrogenase (quinone) activity"/>
    <property type="evidence" value="ECO:0007669"/>
    <property type="project" value="TreeGrafter"/>
</dbReference>
<dbReference type="Gene3D" id="3.40.50.360">
    <property type="match status" value="1"/>
</dbReference>
<dbReference type="InterPro" id="IPR008254">
    <property type="entry name" value="Flavodoxin/NO_synth"/>
</dbReference>
<dbReference type="InterPro" id="IPR029039">
    <property type="entry name" value="Flavoprotein-like_sf"/>
</dbReference>
<dbReference type="InterPro" id="IPR005025">
    <property type="entry name" value="FMN_Rdtase-like_dom"/>
</dbReference>
<dbReference type="PANTHER" id="PTHR30546">
    <property type="entry name" value="FLAVODOXIN-RELATED PROTEIN WRBA-RELATED"/>
    <property type="match status" value="1"/>
</dbReference>
<dbReference type="PANTHER" id="PTHR30546:SF23">
    <property type="entry name" value="FLAVOPROTEIN-LIKE PROTEIN YCP4-RELATED"/>
    <property type="match status" value="1"/>
</dbReference>
<dbReference type="Pfam" id="PF03358">
    <property type="entry name" value="FMN_red"/>
    <property type="match status" value="1"/>
</dbReference>
<dbReference type="SUPFAM" id="SSF52218">
    <property type="entry name" value="Flavoproteins"/>
    <property type="match status" value="1"/>
</dbReference>
<dbReference type="PROSITE" id="PS50902">
    <property type="entry name" value="FLAVODOXIN_LIKE"/>
    <property type="match status" value="1"/>
</dbReference>
<protein>
    <recommendedName>
        <fullName evidence="3">Flavodoxin FldP</fullName>
    </recommendedName>
</protein>
<sequence>MSKAVVVYFSGYGHTKRVAQAAAEGAQASLVEIDSEGNIPEAAWDLLDQAQSILFGAPTYMGSVPWQFKKFADATSRKWFVRQWQDKVFGGFTNSASLNGDKQVSLILMHTLASQHGGIWVSLGLAPANTSASSRADINNLGASVGALVQSPSDADAQAIPSGDLETVKLYAARVARIGQQLHA</sequence>
<evidence type="ECO:0000255" key="1">
    <source>
        <dbReference type="PROSITE-ProRule" id="PRU00088"/>
    </source>
</evidence>
<evidence type="ECO:0000269" key="2">
    <source>
    </source>
</evidence>
<evidence type="ECO:0000303" key="3">
    <source>
    </source>
</evidence>
<evidence type="ECO:0000305" key="4"/>
<evidence type="ECO:0000312" key="5">
    <source>
        <dbReference type="EMBL" id="ABJ12450.1"/>
    </source>
</evidence>